<evidence type="ECO:0000255" key="1">
    <source>
        <dbReference type="HAMAP-Rule" id="MF_00291"/>
    </source>
</evidence>
<evidence type="ECO:0000256" key="2">
    <source>
        <dbReference type="SAM" id="MobiDB-lite"/>
    </source>
</evidence>
<evidence type="ECO:0000305" key="3"/>
<accession>B8FGE6</accession>
<sequence>MVKISMKELLEAGVHFGHQTKRWNPKMKPYIFGARNGIYIVDLQKTVRMFRTACEFVSDVVANGGSVLFVGTKKQAREAVYEEANRAEAYYVHNRWLGGMLTNFQTIKKGIDRLNYLNEIKLNETINLFPKKERLKLEKERVKLDANLGGIRTMTKLPSVIFIIDPKNEAIAVREAKRLNIPTVAVVDTNCDPDDIDYVIPGNDDAIRAIRLLTSRIAEAVVQGKQIAAERRAAEQDKAADDKAQEQAAAEAAKPEPAAPAPAAEAAEEAPAEEGPIIEVIKKSGSEEDGEAAN</sequence>
<protein>
    <recommendedName>
        <fullName evidence="1">Small ribosomal subunit protein uS2</fullName>
    </recommendedName>
    <alternativeName>
        <fullName evidence="3">30S ribosomal protein S2</fullName>
    </alternativeName>
</protein>
<proteinExistence type="inferred from homology"/>
<comment type="similarity">
    <text evidence="1">Belongs to the universal ribosomal protein uS2 family.</text>
</comment>
<name>RS2_DESAL</name>
<dbReference type="EMBL" id="CP001322">
    <property type="protein sequence ID" value="ACL04855.1"/>
    <property type="molecule type" value="Genomic_DNA"/>
</dbReference>
<dbReference type="RefSeq" id="WP_015947915.1">
    <property type="nucleotide sequence ID" value="NC_011768.1"/>
</dbReference>
<dbReference type="SMR" id="B8FGE6"/>
<dbReference type="KEGG" id="dal:Dalk_3165"/>
<dbReference type="eggNOG" id="COG0052">
    <property type="taxonomic scope" value="Bacteria"/>
</dbReference>
<dbReference type="HOGENOM" id="CLU_040318_2_2_7"/>
<dbReference type="Proteomes" id="UP000000739">
    <property type="component" value="Chromosome"/>
</dbReference>
<dbReference type="GO" id="GO:0022627">
    <property type="term" value="C:cytosolic small ribosomal subunit"/>
    <property type="evidence" value="ECO:0007669"/>
    <property type="project" value="TreeGrafter"/>
</dbReference>
<dbReference type="GO" id="GO:0003735">
    <property type="term" value="F:structural constituent of ribosome"/>
    <property type="evidence" value="ECO:0007669"/>
    <property type="project" value="InterPro"/>
</dbReference>
<dbReference type="GO" id="GO:0006412">
    <property type="term" value="P:translation"/>
    <property type="evidence" value="ECO:0007669"/>
    <property type="project" value="UniProtKB-UniRule"/>
</dbReference>
<dbReference type="CDD" id="cd01425">
    <property type="entry name" value="RPS2"/>
    <property type="match status" value="1"/>
</dbReference>
<dbReference type="Gene3D" id="3.40.50.10490">
    <property type="entry name" value="Glucose-6-phosphate isomerase like protein, domain 1"/>
    <property type="match status" value="1"/>
</dbReference>
<dbReference type="Gene3D" id="1.10.287.610">
    <property type="entry name" value="Helix hairpin bin"/>
    <property type="match status" value="1"/>
</dbReference>
<dbReference type="HAMAP" id="MF_00291_B">
    <property type="entry name" value="Ribosomal_uS2_B"/>
    <property type="match status" value="1"/>
</dbReference>
<dbReference type="InterPro" id="IPR001865">
    <property type="entry name" value="Ribosomal_uS2"/>
</dbReference>
<dbReference type="InterPro" id="IPR005706">
    <property type="entry name" value="Ribosomal_uS2_bac/mit/plastid"/>
</dbReference>
<dbReference type="InterPro" id="IPR018130">
    <property type="entry name" value="Ribosomal_uS2_CS"/>
</dbReference>
<dbReference type="InterPro" id="IPR023591">
    <property type="entry name" value="Ribosomal_uS2_flav_dom_sf"/>
</dbReference>
<dbReference type="NCBIfam" id="TIGR01011">
    <property type="entry name" value="rpsB_bact"/>
    <property type="match status" value="1"/>
</dbReference>
<dbReference type="PANTHER" id="PTHR12534">
    <property type="entry name" value="30S RIBOSOMAL PROTEIN S2 PROKARYOTIC AND ORGANELLAR"/>
    <property type="match status" value="1"/>
</dbReference>
<dbReference type="PANTHER" id="PTHR12534:SF0">
    <property type="entry name" value="SMALL RIBOSOMAL SUBUNIT PROTEIN US2M"/>
    <property type="match status" value="1"/>
</dbReference>
<dbReference type="Pfam" id="PF00318">
    <property type="entry name" value="Ribosomal_S2"/>
    <property type="match status" value="1"/>
</dbReference>
<dbReference type="PRINTS" id="PR00395">
    <property type="entry name" value="RIBOSOMALS2"/>
</dbReference>
<dbReference type="SUPFAM" id="SSF52313">
    <property type="entry name" value="Ribosomal protein S2"/>
    <property type="match status" value="1"/>
</dbReference>
<dbReference type="PROSITE" id="PS00962">
    <property type="entry name" value="RIBOSOMAL_S2_1"/>
    <property type="match status" value="1"/>
</dbReference>
<dbReference type="PROSITE" id="PS00963">
    <property type="entry name" value="RIBOSOMAL_S2_2"/>
    <property type="match status" value="1"/>
</dbReference>
<keyword id="KW-1185">Reference proteome</keyword>
<keyword id="KW-0687">Ribonucleoprotein</keyword>
<keyword id="KW-0689">Ribosomal protein</keyword>
<organism>
    <name type="scientific">Desulfatibacillum aliphaticivorans</name>
    <dbReference type="NCBI Taxonomy" id="218208"/>
    <lineage>
        <taxon>Bacteria</taxon>
        <taxon>Pseudomonadati</taxon>
        <taxon>Thermodesulfobacteriota</taxon>
        <taxon>Desulfobacteria</taxon>
        <taxon>Desulfobacterales</taxon>
        <taxon>Desulfatibacillaceae</taxon>
        <taxon>Desulfatibacillum</taxon>
    </lineage>
</organism>
<gene>
    <name evidence="1" type="primary">rpsB</name>
    <name type="ordered locus">Dalk_3165</name>
</gene>
<feature type="chain" id="PRO_1000119421" description="Small ribosomal subunit protein uS2">
    <location>
        <begin position="1"/>
        <end position="294"/>
    </location>
</feature>
<feature type="region of interest" description="Disordered" evidence="2">
    <location>
        <begin position="232"/>
        <end position="294"/>
    </location>
</feature>
<feature type="compositionally biased region" description="Basic and acidic residues" evidence="2">
    <location>
        <begin position="232"/>
        <end position="245"/>
    </location>
</feature>
<feature type="compositionally biased region" description="Low complexity" evidence="2">
    <location>
        <begin position="246"/>
        <end position="265"/>
    </location>
</feature>
<reference key="1">
    <citation type="journal article" date="2012" name="Environ. Microbiol.">
        <title>The genome sequence of Desulfatibacillum alkenivorans AK-01: a blueprint for anaerobic alkane oxidation.</title>
        <authorList>
            <person name="Callaghan A.V."/>
            <person name="Morris B.E."/>
            <person name="Pereira I.A."/>
            <person name="McInerney M.J."/>
            <person name="Austin R.N."/>
            <person name="Groves J.T."/>
            <person name="Kukor J.J."/>
            <person name="Suflita J.M."/>
            <person name="Young L.Y."/>
            <person name="Zylstra G.J."/>
            <person name="Wawrik B."/>
        </authorList>
    </citation>
    <scope>NUCLEOTIDE SEQUENCE [LARGE SCALE GENOMIC DNA]</scope>
    <source>
        <strain>AK-01</strain>
    </source>
</reference>